<protein>
    <recommendedName>
        <fullName evidence="1">DNA-directed RNA polymerase subunit alpha</fullName>
        <shortName evidence="1">PEP</shortName>
        <ecNumber evidence="1">2.7.7.6</ecNumber>
    </recommendedName>
    <alternativeName>
        <fullName evidence="1">Plastid-encoded RNA polymerase subunit alpha</fullName>
        <shortName evidence="1">RNA polymerase subunit alpha</shortName>
    </alternativeName>
</protein>
<evidence type="ECO:0000255" key="1">
    <source>
        <dbReference type="HAMAP-Rule" id="MF_00059"/>
    </source>
</evidence>
<organism>
    <name type="scientific">Phaseolus angularis</name>
    <name type="common">Azuki bean</name>
    <name type="synonym">Vigna angularis</name>
    <dbReference type="NCBI Taxonomy" id="3914"/>
    <lineage>
        <taxon>Eukaryota</taxon>
        <taxon>Viridiplantae</taxon>
        <taxon>Streptophyta</taxon>
        <taxon>Embryophyta</taxon>
        <taxon>Tracheophyta</taxon>
        <taxon>Spermatophyta</taxon>
        <taxon>Magnoliopsida</taxon>
        <taxon>eudicotyledons</taxon>
        <taxon>Gunneridae</taxon>
        <taxon>Pentapetalae</taxon>
        <taxon>rosids</taxon>
        <taxon>fabids</taxon>
        <taxon>Fabales</taxon>
        <taxon>Fabaceae</taxon>
        <taxon>Papilionoideae</taxon>
        <taxon>50 kb inversion clade</taxon>
        <taxon>NPAAA clade</taxon>
        <taxon>indigoferoid/millettioid clade</taxon>
        <taxon>Phaseoleae</taxon>
        <taxon>Vigna</taxon>
    </lineage>
</organism>
<keyword id="KW-0150">Chloroplast</keyword>
<keyword id="KW-0240">DNA-directed RNA polymerase</keyword>
<keyword id="KW-0548">Nucleotidyltransferase</keyword>
<keyword id="KW-0934">Plastid</keyword>
<keyword id="KW-0804">Transcription</keyword>
<keyword id="KW-0808">Transferase</keyword>
<dbReference type="EC" id="2.7.7.6" evidence="1"/>
<dbReference type="EMBL" id="AF536226">
    <property type="protein sequence ID" value="AAN04898.1"/>
    <property type="molecule type" value="Genomic_DNA"/>
</dbReference>
<dbReference type="GO" id="GO:0009507">
    <property type="term" value="C:chloroplast"/>
    <property type="evidence" value="ECO:0007669"/>
    <property type="project" value="UniProtKB-SubCell"/>
</dbReference>
<dbReference type="GO" id="GO:0000428">
    <property type="term" value="C:DNA-directed RNA polymerase complex"/>
    <property type="evidence" value="ECO:0007669"/>
    <property type="project" value="UniProtKB-KW"/>
</dbReference>
<dbReference type="GO" id="GO:0005739">
    <property type="term" value="C:mitochondrion"/>
    <property type="evidence" value="ECO:0007669"/>
    <property type="project" value="GOC"/>
</dbReference>
<dbReference type="GO" id="GO:0003677">
    <property type="term" value="F:DNA binding"/>
    <property type="evidence" value="ECO:0007669"/>
    <property type="project" value="UniProtKB-UniRule"/>
</dbReference>
<dbReference type="GO" id="GO:0003899">
    <property type="term" value="F:DNA-directed RNA polymerase activity"/>
    <property type="evidence" value="ECO:0007669"/>
    <property type="project" value="UniProtKB-UniRule"/>
</dbReference>
<dbReference type="GO" id="GO:0046983">
    <property type="term" value="F:protein dimerization activity"/>
    <property type="evidence" value="ECO:0007669"/>
    <property type="project" value="InterPro"/>
</dbReference>
<dbReference type="GO" id="GO:0006351">
    <property type="term" value="P:DNA-templated transcription"/>
    <property type="evidence" value="ECO:0007669"/>
    <property type="project" value="UniProtKB-UniRule"/>
</dbReference>
<dbReference type="CDD" id="cd06928">
    <property type="entry name" value="RNAP_alpha_NTD"/>
    <property type="match status" value="1"/>
</dbReference>
<dbReference type="FunFam" id="2.170.120.12:FF:000001">
    <property type="entry name" value="DNA-directed RNA polymerase subunit alpha"/>
    <property type="match status" value="1"/>
</dbReference>
<dbReference type="Gene3D" id="1.10.150.20">
    <property type="entry name" value="5' to 3' exonuclease, C-terminal subdomain"/>
    <property type="match status" value="1"/>
</dbReference>
<dbReference type="Gene3D" id="2.170.120.12">
    <property type="entry name" value="DNA-directed RNA polymerase, insert domain"/>
    <property type="match status" value="1"/>
</dbReference>
<dbReference type="Gene3D" id="3.30.1360.10">
    <property type="entry name" value="RNA polymerase, RBP11-like subunit"/>
    <property type="match status" value="1"/>
</dbReference>
<dbReference type="HAMAP" id="MF_00059">
    <property type="entry name" value="RNApol_bact_RpoA"/>
    <property type="match status" value="1"/>
</dbReference>
<dbReference type="InterPro" id="IPR011262">
    <property type="entry name" value="DNA-dir_RNA_pol_insert"/>
</dbReference>
<dbReference type="InterPro" id="IPR011263">
    <property type="entry name" value="DNA-dir_RNA_pol_RpoA/D/Rpb3"/>
</dbReference>
<dbReference type="InterPro" id="IPR011773">
    <property type="entry name" value="DNA-dir_RpoA"/>
</dbReference>
<dbReference type="InterPro" id="IPR036603">
    <property type="entry name" value="RBP11-like"/>
</dbReference>
<dbReference type="InterPro" id="IPR011260">
    <property type="entry name" value="RNAP_asu_C"/>
</dbReference>
<dbReference type="InterPro" id="IPR036643">
    <property type="entry name" value="RNApol_insert_sf"/>
</dbReference>
<dbReference type="NCBIfam" id="TIGR02027">
    <property type="entry name" value="rpoA"/>
    <property type="match status" value="1"/>
</dbReference>
<dbReference type="Pfam" id="PF01000">
    <property type="entry name" value="RNA_pol_A_bac"/>
    <property type="match status" value="1"/>
</dbReference>
<dbReference type="Pfam" id="PF03118">
    <property type="entry name" value="RNA_pol_A_CTD"/>
    <property type="match status" value="1"/>
</dbReference>
<dbReference type="Pfam" id="PF01193">
    <property type="entry name" value="RNA_pol_L"/>
    <property type="match status" value="1"/>
</dbReference>
<dbReference type="SMART" id="SM00662">
    <property type="entry name" value="RPOLD"/>
    <property type="match status" value="1"/>
</dbReference>
<dbReference type="SUPFAM" id="SSF47789">
    <property type="entry name" value="C-terminal domain of RNA polymerase alpha subunit"/>
    <property type="match status" value="1"/>
</dbReference>
<dbReference type="SUPFAM" id="SSF56553">
    <property type="entry name" value="Insert subdomain of RNA polymerase alpha subunit"/>
    <property type="match status" value="1"/>
</dbReference>
<dbReference type="SUPFAM" id="SSF55257">
    <property type="entry name" value="RBP11-like subunits of RNA polymerase"/>
    <property type="match status" value="1"/>
</dbReference>
<reference key="1">
    <citation type="journal article" date="2002" name="DNA Res.">
        <title>Evolutionary re-organisation of a large operon in adzuki bean chloroplast DNA caused by inverted repeat movement.</title>
        <authorList>
            <person name="Perry A.S."/>
            <person name="Brennan S."/>
            <person name="Murphy D.J."/>
            <person name="Kavanagh T.A."/>
            <person name="Wolfe K.H."/>
        </authorList>
    </citation>
    <scope>NUCLEOTIDE SEQUENCE [GENOMIC DNA]</scope>
    <source>
        <strain>cv. Erimo-shozu</strain>
    </source>
</reference>
<feature type="chain" id="PRO_0000175480" description="DNA-directed RNA polymerase subunit alpha">
    <location>
        <begin position="1"/>
        <end position="333"/>
    </location>
</feature>
<feature type="region of interest" description="Alpha N-terminal domain (alpha-NTD)" evidence="1">
    <location>
        <begin position="1"/>
        <end position="233"/>
    </location>
</feature>
<feature type="region of interest" description="Alpha C-terminal domain (alpha-CTD)" evidence="1">
    <location>
        <begin position="266"/>
        <end position="333"/>
    </location>
</feature>
<gene>
    <name evidence="1" type="primary">rpoA</name>
</gene>
<proteinExistence type="inferred from homology"/>
<accession>Q8MC99</accession>
<name>RPOA_PHAAN</name>
<geneLocation type="chloroplast"/>
<comment type="function">
    <text evidence="1">DNA-dependent RNA polymerase catalyzes the transcription of DNA into RNA using the four ribonucleoside triphosphates as substrates.</text>
</comment>
<comment type="catalytic activity">
    <reaction evidence="1">
        <text>RNA(n) + a ribonucleoside 5'-triphosphate = RNA(n+1) + diphosphate</text>
        <dbReference type="Rhea" id="RHEA:21248"/>
        <dbReference type="Rhea" id="RHEA-COMP:14527"/>
        <dbReference type="Rhea" id="RHEA-COMP:17342"/>
        <dbReference type="ChEBI" id="CHEBI:33019"/>
        <dbReference type="ChEBI" id="CHEBI:61557"/>
        <dbReference type="ChEBI" id="CHEBI:140395"/>
        <dbReference type="EC" id="2.7.7.6"/>
    </reaction>
</comment>
<comment type="subunit">
    <text evidence="1">In plastids the minimal PEP RNA polymerase catalytic core is composed of four subunits: alpha, beta, beta', and beta''. When a (nuclear-encoded) sigma factor is associated with the core the holoenzyme is formed, which can initiate transcription.</text>
</comment>
<comment type="subcellular location">
    <subcellularLocation>
        <location>Plastid</location>
        <location>Chloroplast</location>
    </subcellularLocation>
</comment>
<comment type="domain">
    <text evidence="1">The N-terminal domain is essential for RNAP assembly and basal transcription, whereas the C-terminal domain is involved in interaction with transcriptional regulators and with upstream promoter elements.</text>
</comment>
<comment type="similarity">
    <text evidence="1">Belongs to the RNA polymerase alpha chain family.</text>
</comment>
<sequence>MVQEKLRFSTRTLQWKCVESRIESKRLYYGRFILSPLMKGQADTIGIAIRRILLGEIEGTCITRVKSEKIPHEYSTIIGIEESVHEIFMNLKEIVLKSNMYGTQDASISFKGPGYITAQDIILPPSVEIVDNRQHIANVTEPVNLCIELKIERNRGYRIKTLKNFQDGSYDIDARFMPVRNVNYSIHSYVNGNEKQEILFLEIWTNGSLTPKEALYEASQNLIDLFIPFLHAEEENFNLEKKKHKVTLPLFTFHDILVKDKLRKNKKEIALKSIFIDQLELPPRIYNCLKRSNIHTLLELLNNSQEXLLKIEHFRVEDGKSILDILKIQKYFT</sequence>